<proteinExistence type="inferred from homology"/>
<organism>
    <name type="scientific">Caldanaerobacter subterraneus subsp. tengcongensis (strain DSM 15242 / JCM 11007 / NBRC 100824 / MB4)</name>
    <name type="common">Thermoanaerobacter tengcongensis</name>
    <dbReference type="NCBI Taxonomy" id="273068"/>
    <lineage>
        <taxon>Bacteria</taxon>
        <taxon>Bacillati</taxon>
        <taxon>Bacillota</taxon>
        <taxon>Clostridia</taxon>
        <taxon>Thermoanaerobacterales</taxon>
        <taxon>Thermoanaerobacteraceae</taxon>
        <taxon>Caldanaerobacter</taxon>
    </lineage>
</organism>
<accession>Q8R9V2</accession>
<comment type="function">
    <text evidence="1">Catalyzes the formation of N(4)-acetylcytidine (ac(4)C) at the wobble position of elongator tRNA(Met), using acetate and ATP as substrates. First activates an acetate ion to form acetyladenylate (Ac-AMP) and then transfers the acetyl group to tRNA to form ac(4)C34.</text>
</comment>
<comment type="catalytic activity">
    <reaction evidence="1">
        <text>cytidine(34) in elongator tRNA(Met) + acetate + ATP = N(4)-acetylcytidine(34) in elongator tRNA(Met) + AMP + diphosphate</text>
        <dbReference type="Rhea" id="RHEA:58144"/>
        <dbReference type="Rhea" id="RHEA-COMP:10693"/>
        <dbReference type="Rhea" id="RHEA-COMP:10694"/>
        <dbReference type="ChEBI" id="CHEBI:30089"/>
        <dbReference type="ChEBI" id="CHEBI:30616"/>
        <dbReference type="ChEBI" id="CHEBI:33019"/>
        <dbReference type="ChEBI" id="CHEBI:74900"/>
        <dbReference type="ChEBI" id="CHEBI:82748"/>
        <dbReference type="ChEBI" id="CHEBI:456215"/>
    </reaction>
</comment>
<comment type="subcellular location">
    <subcellularLocation>
        <location evidence="1">Cytoplasm</location>
    </subcellularLocation>
</comment>
<comment type="similarity">
    <text evidence="1">Belongs to the TmcAL family.</text>
</comment>
<gene>
    <name evidence="1" type="primary">tmcAL</name>
    <name type="ordered locus">TTE1483</name>
</gene>
<protein>
    <recommendedName>
        <fullName evidence="1">tRNA(Met) cytidine acetate ligase</fullName>
        <ecNumber evidence="1">6.3.4.-</ecNumber>
    </recommendedName>
</protein>
<sequence length="401" mass="45357">MEALGIIVEYNPLHNGHLYHLEESIKLTKCQYVVAVMSGNFVQRGEPAIVDKWKRAEMALKAGVDLVIELPVVYATSTAENFAYGAVKLLDSLKVIDCIAFGSEEGDLEKLSKIADILLEEPPDYKRALKENLGKGLTFAKARELALVKVTGDESISKTLQTSNNILGIEYLKALKKIKSSIVPFTIKRRGALYTSLKLEGEFASATSIRKAIEEKGIKAVKNYVPDFTLKILERAFKEGQGPVYLQDFSPIILYLLRSGHPLENIFDVAEGIDNKIYKAASMTNNIKDLIKLTKSKRYTESRIRHILLHLLLKIDKKLFKEFDGPNYIRVLGFSEKGKTILKEIKKKTELPIITKVAQYKSKIEDSRMFERDLFATDVYTLAYKNFAISKLDFFHPIIKL</sequence>
<dbReference type="EC" id="6.3.4.-" evidence="1"/>
<dbReference type="EMBL" id="AE008691">
    <property type="protein sequence ID" value="AAM24702.1"/>
    <property type="molecule type" value="Genomic_DNA"/>
</dbReference>
<dbReference type="RefSeq" id="WP_011025745.1">
    <property type="nucleotide sequence ID" value="NC_003869.1"/>
</dbReference>
<dbReference type="SMR" id="Q8R9V2"/>
<dbReference type="STRING" id="273068.TTE1483"/>
<dbReference type="KEGG" id="tte:TTE1483"/>
<dbReference type="eggNOG" id="COG1323">
    <property type="taxonomic scope" value="Bacteria"/>
</dbReference>
<dbReference type="HOGENOM" id="CLU_038915_0_1_9"/>
<dbReference type="OrthoDB" id="9769796at2"/>
<dbReference type="Proteomes" id="UP000000555">
    <property type="component" value="Chromosome"/>
</dbReference>
<dbReference type="GO" id="GO:0005737">
    <property type="term" value="C:cytoplasm"/>
    <property type="evidence" value="ECO:0007669"/>
    <property type="project" value="UniProtKB-SubCell"/>
</dbReference>
<dbReference type="GO" id="GO:0005524">
    <property type="term" value="F:ATP binding"/>
    <property type="evidence" value="ECO:0007669"/>
    <property type="project" value="UniProtKB-KW"/>
</dbReference>
<dbReference type="GO" id="GO:0016879">
    <property type="term" value="F:ligase activity, forming carbon-nitrogen bonds"/>
    <property type="evidence" value="ECO:0007669"/>
    <property type="project" value="UniProtKB-UniRule"/>
</dbReference>
<dbReference type="GO" id="GO:0000049">
    <property type="term" value="F:tRNA binding"/>
    <property type="evidence" value="ECO:0007669"/>
    <property type="project" value="UniProtKB-KW"/>
</dbReference>
<dbReference type="GO" id="GO:0006400">
    <property type="term" value="P:tRNA modification"/>
    <property type="evidence" value="ECO:0007669"/>
    <property type="project" value="UniProtKB-UniRule"/>
</dbReference>
<dbReference type="Gene3D" id="3.40.50.620">
    <property type="entry name" value="HUPs"/>
    <property type="match status" value="1"/>
</dbReference>
<dbReference type="HAMAP" id="MF_01539">
    <property type="entry name" value="TmcAL"/>
    <property type="match status" value="1"/>
</dbReference>
<dbReference type="InterPro" id="IPR014729">
    <property type="entry name" value="Rossmann-like_a/b/a_fold"/>
</dbReference>
<dbReference type="InterPro" id="IPR008513">
    <property type="entry name" value="tRNA(Met)_cyd_acetate_ligase"/>
</dbReference>
<dbReference type="NCBIfam" id="NF010191">
    <property type="entry name" value="PRK13670.1"/>
    <property type="match status" value="1"/>
</dbReference>
<dbReference type="PANTHER" id="PTHR37825">
    <property type="entry name" value="TRNA(MET) CYTIDINE ACETATE LIGASE"/>
    <property type="match status" value="1"/>
</dbReference>
<dbReference type="PANTHER" id="PTHR37825:SF1">
    <property type="entry name" value="TRNA(MET) CYTIDINE ACETATE LIGASE"/>
    <property type="match status" value="1"/>
</dbReference>
<dbReference type="Pfam" id="PF05636">
    <property type="entry name" value="HIGH_NTase1"/>
    <property type="match status" value="1"/>
</dbReference>
<dbReference type="SUPFAM" id="SSF52374">
    <property type="entry name" value="Nucleotidylyl transferase"/>
    <property type="match status" value="1"/>
</dbReference>
<name>TMCAL_CALS4</name>
<reference key="1">
    <citation type="journal article" date="2002" name="Genome Res.">
        <title>A complete sequence of the T. tengcongensis genome.</title>
        <authorList>
            <person name="Bao Q."/>
            <person name="Tian Y."/>
            <person name="Li W."/>
            <person name="Xu Z."/>
            <person name="Xuan Z."/>
            <person name="Hu S."/>
            <person name="Dong W."/>
            <person name="Yang J."/>
            <person name="Chen Y."/>
            <person name="Xue Y."/>
            <person name="Xu Y."/>
            <person name="Lai X."/>
            <person name="Huang L."/>
            <person name="Dong X."/>
            <person name="Ma Y."/>
            <person name="Ling L."/>
            <person name="Tan H."/>
            <person name="Chen R."/>
            <person name="Wang J."/>
            <person name="Yu J."/>
            <person name="Yang H."/>
        </authorList>
    </citation>
    <scope>NUCLEOTIDE SEQUENCE [LARGE SCALE GENOMIC DNA]</scope>
    <source>
        <strain>DSM 15242 / JCM 11007 / NBRC 100824 / MB4</strain>
    </source>
</reference>
<keyword id="KW-0067">ATP-binding</keyword>
<keyword id="KW-0963">Cytoplasm</keyword>
<keyword id="KW-0436">Ligase</keyword>
<keyword id="KW-0547">Nucleotide-binding</keyword>
<keyword id="KW-1185">Reference proteome</keyword>
<keyword id="KW-0694">RNA-binding</keyword>
<keyword id="KW-0819">tRNA processing</keyword>
<keyword id="KW-0820">tRNA-binding</keyword>
<evidence type="ECO:0000255" key="1">
    <source>
        <dbReference type="HAMAP-Rule" id="MF_01539"/>
    </source>
</evidence>
<feature type="chain" id="PRO_0000147198" description="tRNA(Met) cytidine acetate ligase">
    <location>
        <begin position="1"/>
        <end position="401"/>
    </location>
</feature>
<feature type="binding site" evidence="1">
    <location>
        <begin position="7"/>
        <end position="20"/>
    </location>
    <ligand>
        <name>ATP</name>
        <dbReference type="ChEBI" id="CHEBI:30616"/>
    </ligand>
</feature>
<feature type="binding site" evidence="1">
    <location>
        <position position="102"/>
    </location>
    <ligand>
        <name>ATP</name>
        <dbReference type="ChEBI" id="CHEBI:30616"/>
    </ligand>
</feature>
<feature type="binding site" evidence="1">
    <location>
        <position position="164"/>
    </location>
    <ligand>
        <name>ATP</name>
        <dbReference type="ChEBI" id="CHEBI:30616"/>
    </ligand>
</feature>
<feature type="binding site" evidence="1">
    <location>
        <position position="189"/>
    </location>
    <ligand>
        <name>ATP</name>
        <dbReference type="ChEBI" id="CHEBI:30616"/>
    </ligand>
</feature>